<sequence>MKKTLLGSLILLAFAGNVQADINTETSGKVTFFGKVVENTCKVKTEHKNLSVVLNDVGKNSLSTKVNTAMPTPFTITLQNCDPTTANGTANKANKVGLYFYSWKNVDKENNFTLKNEQTTADYATNVNIQLMESNGTKAISVVGKETEDFMHTNNNGVALNQTHPNNAHISGSTQLTTGTNELPLHFIAQYYATNKATAGKVQSSVDFQIAYE</sequence>
<reference key="1">
    <citation type="journal article" date="1989" name="EMBO J.">
        <title>Cloning and expression in Escherichia coli of Haemophilus influenzae fimbrial genes establishes adherence to oropharyngeal epithelial cells.</title>
        <authorList>
            <person name="van Ham S.M."/>
            <person name="Mooi F.R."/>
            <person name="Sindhunata M.G."/>
            <person name="Maris W.R."/>
            <person name="van Alphen L."/>
        </authorList>
    </citation>
    <scope>NUCLEOTIDE SEQUENCE [GENOMIC DNA]</scope>
    <scope>PROTEIN SEQUENCE OF 21-36</scope>
    <source>
        <strain>AM30 (770235) / Serotype B</strain>
    </source>
</reference>
<reference key="2">
    <citation type="journal article" date="1994" name="Mol. Microbiol.">
        <title>The fimbrial gene cluster of Haemophilus influenzae type b.</title>
        <authorList>
            <person name="van Ham M.S."/>
            <person name="van Alphen L."/>
            <person name="Mooi F.R."/>
            <person name="van Putten J.P.M."/>
        </authorList>
    </citation>
    <scope>NUCLEOTIDE SEQUENCE [GENOMIC DNA]</scope>
    <source>
        <strain>AM30 (770235) / Serotype B</strain>
    </source>
</reference>
<reference key="3">
    <citation type="journal article" date="2001" name="Infect. Immun.">
        <title>Analysis of pilus adhesins from Haemophilus influenzae biotype IV strains.</title>
        <authorList>
            <person name="Clemans D.L."/>
            <person name="Marrs C.F."/>
            <person name="Bauer R.J."/>
            <person name="Patel M."/>
            <person name="Gilsdorf J.R."/>
        </authorList>
    </citation>
    <scope>NUCLEOTIDE SEQUENCE [GENOMIC DNA]</scope>
    <source>
        <strain>1595 / Biotype IV</strain>
    </source>
</reference>
<gene>
    <name type="primary">hifA</name>
</gene>
<evidence type="ECO:0000269" key="1">
    <source>
    </source>
</evidence>
<evidence type="ECO:0000305" key="2"/>
<accession>P14212</accession>
<organism>
    <name type="scientific">Haemophilus influenzae</name>
    <dbReference type="NCBI Taxonomy" id="727"/>
    <lineage>
        <taxon>Bacteria</taxon>
        <taxon>Pseudomonadati</taxon>
        <taxon>Pseudomonadota</taxon>
        <taxon>Gammaproteobacteria</taxon>
        <taxon>Pasteurellales</taxon>
        <taxon>Pasteurellaceae</taxon>
        <taxon>Haemophilus</taxon>
    </lineage>
</organism>
<feature type="signal peptide" evidence="1">
    <location>
        <begin position="1"/>
        <end position="20"/>
    </location>
</feature>
<feature type="chain" id="PRO_0000009217" description="Major fimbrial subunit">
    <location>
        <begin position="21"/>
        <end position="213"/>
    </location>
</feature>
<feature type="disulfide bond" evidence="2">
    <location>
        <begin position="41"/>
        <end position="81"/>
    </location>
</feature>
<comment type="function">
    <text>Mediates adherence to oropharyngeal epithelial cells. Helps the airway colonization process.</text>
</comment>
<comment type="subcellular location">
    <subcellularLocation>
        <location>Fimbrium</location>
    </subcellularLocation>
</comment>
<comment type="similarity">
    <text evidence="2">Belongs to the fimbrial protein family.</text>
</comment>
<name>HIFA2_HAEIF</name>
<dbReference type="EMBL" id="X16991">
    <property type="protein sequence ID" value="CAA34859.1"/>
    <property type="molecule type" value="Genomic_DNA"/>
</dbReference>
<dbReference type="EMBL" id="Z33502">
    <property type="protein sequence ID" value="CAA83905.1"/>
    <property type="molecule type" value="Genomic_DNA"/>
</dbReference>
<dbReference type="EMBL" id="AY034824">
    <property type="protein sequence ID" value="AAK62564.1"/>
    <property type="molecule type" value="Genomic_DNA"/>
</dbReference>
<dbReference type="PIR" id="S06788">
    <property type="entry name" value="S06788"/>
</dbReference>
<dbReference type="SMR" id="P14212"/>
<dbReference type="GO" id="GO:0009289">
    <property type="term" value="C:pilus"/>
    <property type="evidence" value="ECO:0007669"/>
    <property type="project" value="UniProtKB-SubCell"/>
</dbReference>
<dbReference type="GO" id="GO:0043709">
    <property type="term" value="P:cell adhesion involved in single-species biofilm formation"/>
    <property type="evidence" value="ECO:0007669"/>
    <property type="project" value="TreeGrafter"/>
</dbReference>
<dbReference type="Gene3D" id="2.60.40.1090">
    <property type="entry name" value="Fimbrial-type adhesion domain"/>
    <property type="match status" value="1"/>
</dbReference>
<dbReference type="InterPro" id="IPR000259">
    <property type="entry name" value="Adhesion_dom_fimbrial"/>
</dbReference>
<dbReference type="InterPro" id="IPR036937">
    <property type="entry name" value="Adhesion_dom_fimbrial_sf"/>
</dbReference>
<dbReference type="InterPro" id="IPR008966">
    <property type="entry name" value="Adhesion_dom_sf"/>
</dbReference>
<dbReference type="InterPro" id="IPR050263">
    <property type="entry name" value="Bact_Fimbrial_Adh_Pro"/>
</dbReference>
<dbReference type="PANTHER" id="PTHR33420:SF3">
    <property type="entry name" value="FIMBRIAL SUBUNIT ELFA"/>
    <property type="match status" value="1"/>
</dbReference>
<dbReference type="PANTHER" id="PTHR33420">
    <property type="entry name" value="FIMBRIAL SUBUNIT ELFA-RELATED"/>
    <property type="match status" value="1"/>
</dbReference>
<dbReference type="Pfam" id="PF00419">
    <property type="entry name" value="Fimbrial"/>
    <property type="match status" value="1"/>
</dbReference>
<dbReference type="SUPFAM" id="SSF49401">
    <property type="entry name" value="Bacterial adhesins"/>
    <property type="match status" value="1"/>
</dbReference>
<protein>
    <recommendedName>
        <fullName>Major fimbrial subunit</fullName>
    </recommendedName>
    <alternativeName>
        <fullName>Major pilin</fullName>
    </alternativeName>
</protein>
<proteinExistence type="evidence at protein level"/>
<keyword id="KW-0903">Direct protein sequencing</keyword>
<keyword id="KW-1015">Disulfide bond</keyword>
<keyword id="KW-0281">Fimbrium</keyword>
<keyword id="KW-0732">Signal</keyword>